<dbReference type="EMBL" id="AY927868">
    <property type="protein sequence ID" value="AAX22217.1"/>
    <property type="molecule type" value="mRNA"/>
</dbReference>
<dbReference type="EMBL" id="AL161452">
    <property type="status" value="NOT_ANNOTATED_CDS"/>
    <property type="molecule type" value="Genomic_DNA"/>
</dbReference>
<dbReference type="EMBL" id="BC021261">
    <property type="protein sequence ID" value="AAH21261.1"/>
    <property type="molecule type" value="mRNA"/>
</dbReference>
<dbReference type="CCDS" id="CCDS43899.1">
    <molecule id="Q5BN46-1"/>
</dbReference>
<dbReference type="CCDS" id="CCDS6989.1">
    <molecule id="Q5BN46-2"/>
</dbReference>
<dbReference type="RefSeq" id="NP_001041730.1">
    <molecule id="Q5BN46-1"/>
    <property type="nucleotide sequence ID" value="NM_001048265.2"/>
</dbReference>
<dbReference type="RefSeq" id="NP_653255.1">
    <molecule id="Q5BN46-2"/>
    <property type="nucleotide sequence ID" value="NM_144654.3"/>
</dbReference>
<dbReference type="PDB" id="7UNG">
    <property type="method" value="EM"/>
    <property type="resolution" value="3.60 A"/>
    <property type="chains" value="y/z=1-136"/>
</dbReference>
<dbReference type="PDB" id="8J07">
    <property type="method" value="EM"/>
    <property type="resolution" value="4.10 A"/>
    <property type="chains" value="4S/4T=1-136"/>
</dbReference>
<dbReference type="PDBsum" id="7UNG"/>
<dbReference type="PDBsum" id="8J07"/>
<dbReference type="EMDB" id="EMD-26624"/>
<dbReference type="EMDB" id="EMD-35888"/>
<dbReference type="SMR" id="Q5BN46"/>
<dbReference type="BioGRID" id="126503">
    <property type="interactions" value="2"/>
</dbReference>
<dbReference type="FunCoup" id="Q5BN46">
    <property type="interactions" value="279"/>
</dbReference>
<dbReference type="IntAct" id="Q5BN46">
    <property type="interactions" value="2"/>
</dbReference>
<dbReference type="STRING" id="9606.ENSP00000395281"/>
<dbReference type="GlyGen" id="Q5BN46">
    <property type="glycosylation" value="1 site, 1 N-linked glycan (1 site)"/>
</dbReference>
<dbReference type="iPTMnet" id="Q5BN46"/>
<dbReference type="PhosphoSitePlus" id="Q5BN46"/>
<dbReference type="BioMuta" id="C9orf116"/>
<dbReference type="MassIVE" id="Q5BN46"/>
<dbReference type="PaxDb" id="9606-ENSP00000395281"/>
<dbReference type="PeptideAtlas" id="Q5BN46"/>
<dbReference type="ProteomicsDB" id="62718">
    <molecule id="Q5BN46-1"/>
</dbReference>
<dbReference type="ProteomicsDB" id="62719">
    <molecule id="Q5BN46-2"/>
</dbReference>
<dbReference type="Antibodypedia" id="18585">
    <property type="antibodies" value="51 antibodies from 18 providers"/>
</dbReference>
<dbReference type="DNASU" id="138162"/>
<dbReference type="Ensembl" id="ENST00000371789.7">
    <molecule id="Q5BN46-2"/>
    <property type="protein sequence ID" value="ENSP00000360854.3"/>
    <property type="gene ID" value="ENSG00000160345.13"/>
</dbReference>
<dbReference type="Ensembl" id="ENST00000371791.5">
    <molecule id="Q5BN46-2"/>
    <property type="protein sequence ID" value="ENSP00000360856.1"/>
    <property type="gene ID" value="ENSG00000160345.13"/>
</dbReference>
<dbReference type="Ensembl" id="ENST00000429260.7">
    <molecule id="Q5BN46-1"/>
    <property type="protein sequence ID" value="ENSP00000395281.2"/>
    <property type="gene ID" value="ENSG00000160345.13"/>
</dbReference>
<dbReference type="GeneID" id="138162"/>
<dbReference type="KEGG" id="hsa:138162"/>
<dbReference type="MANE-Select" id="ENST00000429260.7">
    <property type="protein sequence ID" value="ENSP00000395281.2"/>
    <property type="RefSeq nucleotide sequence ID" value="NM_001048265.2"/>
    <property type="RefSeq protein sequence ID" value="NP_001041730.1"/>
</dbReference>
<dbReference type="UCSC" id="uc004cfs.2">
    <molecule id="Q5BN46-1"/>
    <property type="organism name" value="human"/>
</dbReference>
<dbReference type="AGR" id="HGNC:28435"/>
<dbReference type="CTD" id="138162"/>
<dbReference type="DisGeNET" id="138162"/>
<dbReference type="GeneCards" id="PIERCE1"/>
<dbReference type="HGNC" id="HGNC:28435">
    <property type="gene designation" value="PIERCE1"/>
</dbReference>
<dbReference type="HPA" id="ENSG00000160345">
    <property type="expression patterns" value="Tissue enhanced (choroid plexus, fallopian tube, testis)"/>
</dbReference>
<dbReference type="MIM" id="614502">
    <property type="type" value="gene"/>
</dbReference>
<dbReference type="neXtProt" id="NX_Q5BN46"/>
<dbReference type="OpenTargets" id="ENSG00000160345"/>
<dbReference type="VEuPathDB" id="HostDB:ENSG00000160345"/>
<dbReference type="eggNOG" id="ENOG502S22V">
    <property type="taxonomic scope" value="Eukaryota"/>
</dbReference>
<dbReference type="GeneTree" id="ENSGT00940000154745"/>
<dbReference type="HOGENOM" id="CLU_135708_0_0_1"/>
<dbReference type="InParanoid" id="Q5BN46"/>
<dbReference type="OMA" id="MFRNNTF"/>
<dbReference type="OrthoDB" id="546383at2759"/>
<dbReference type="PAN-GO" id="Q5BN46">
    <property type="GO annotations" value="0 GO annotations based on evolutionary models"/>
</dbReference>
<dbReference type="PhylomeDB" id="Q5BN46"/>
<dbReference type="TreeFam" id="TF323876"/>
<dbReference type="PathwayCommons" id="Q5BN46"/>
<dbReference type="SignaLink" id="Q5BN46"/>
<dbReference type="BioGRID-ORCS" id="138162">
    <property type="hits" value="17 hits in 1144 CRISPR screens"/>
</dbReference>
<dbReference type="ChiTaRS" id="C9orf116">
    <property type="organism name" value="human"/>
</dbReference>
<dbReference type="GenomeRNAi" id="138162"/>
<dbReference type="Pharos" id="Q5BN46">
    <property type="development level" value="Tdark"/>
</dbReference>
<dbReference type="PRO" id="PR:Q5BN46"/>
<dbReference type="Proteomes" id="UP000005640">
    <property type="component" value="Chromosome 9"/>
</dbReference>
<dbReference type="RNAct" id="Q5BN46">
    <property type="molecule type" value="protein"/>
</dbReference>
<dbReference type="Bgee" id="ENSG00000160345">
    <property type="expression patterns" value="Expressed in bronchial epithelial cell and 111 other cell types or tissues"/>
</dbReference>
<dbReference type="ExpressionAtlas" id="Q5BN46">
    <property type="expression patterns" value="baseline and differential"/>
</dbReference>
<dbReference type="GO" id="GO:0160111">
    <property type="term" value="C:axonemal A tubule inner sheath"/>
    <property type="evidence" value="ECO:0000250"/>
    <property type="project" value="UniProtKB"/>
</dbReference>
<dbReference type="GO" id="GO:0005879">
    <property type="term" value="C:axonemal microtubule"/>
    <property type="evidence" value="ECO:0000314"/>
    <property type="project" value="UniProtKB"/>
</dbReference>
<dbReference type="GO" id="GO:0005737">
    <property type="term" value="C:cytoplasm"/>
    <property type="evidence" value="ECO:0000250"/>
    <property type="project" value="UniProtKB"/>
</dbReference>
<dbReference type="GO" id="GO:0005634">
    <property type="term" value="C:nucleus"/>
    <property type="evidence" value="ECO:0000250"/>
    <property type="project" value="UniProtKB"/>
</dbReference>
<dbReference type="GO" id="GO:0036126">
    <property type="term" value="C:sperm flagellum"/>
    <property type="evidence" value="ECO:0000250"/>
    <property type="project" value="UniProtKB"/>
</dbReference>
<dbReference type="GO" id="GO:0035082">
    <property type="term" value="P:axoneme assembly"/>
    <property type="evidence" value="ECO:0000250"/>
    <property type="project" value="UniProtKB"/>
</dbReference>
<dbReference type="GO" id="GO:0071494">
    <property type="term" value="P:cellular response to UV-C"/>
    <property type="evidence" value="ECO:0007669"/>
    <property type="project" value="Ensembl"/>
</dbReference>
<dbReference type="GO" id="GO:0003341">
    <property type="term" value="P:cilium movement"/>
    <property type="evidence" value="ECO:0000250"/>
    <property type="project" value="UniProtKB"/>
</dbReference>
<dbReference type="GO" id="GO:0007368">
    <property type="term" value="P:determination of left/right symmetry"/>
    <property type="evidence" value="ECO:0000250"/>
    <property type="project" value="UniProtKB"/>
</dbReference>
<dbReference type="GO" id="GO:0006974">
    <property type="term" value="P:DNA damage response"/>
    <property type="evidence" value="ECO:0007669"/>
    <property type="project" value="Ensembl"/>
</dbReference>
<dbReference type="GO" id="GO:0061966">
    <property type="term" value="P:establishment of left/right asymmetry"/>
    <property type="evidence" value="ECO:0000250"/>
    <property type="project" value="UniProtKB"/>
</dbReference>
<dbReference type="GO" id="GO:0030317">
    <property type="term" value="P:flagellated sperm motility"/>
    <property type="evidence" value="ECO:0000250"/>
    <property type="project" value="UniProtKB"/>
</dbReference>
<dbReference type="GO" id="GO:0010468">
    <property type="term" value="P:regulation of gene expression"/>
    <property type="evidence" value="ECO:0007669"/>
    <property type="project" value="Ensembl"/>
</dbReference>
<dbReference type="InterPro" id="IPR026507">
    <property type="entry name" value="PIRC1/2"/>
</dbReference>
<dbReference type="PANTHER" id="PTHR20899">
    <property type="entry name" value="PIERCE HOMOLOG"/>
    <property type="match status" value="1"/>
</dbReference>
<dbReference type="PANTHER" id="PTHR20899:SF1">
    <property type="entry name" value="PIERCER OF MICROTUBULE WALL 1 PROTEIN"/>
    <property type="match status" value="1"/>
</dbReference>
<dbReference type="Pfam" id="PF14892">
    <property type="entry name" value="PIRC1_2"/>
    <property type="match status" value="1"/>
</dbReference>
<feature type="chain" id="PRO_0000089728" description="Piercer of microtubule wall 1 protein">
    <location>
        <begin position="1"/>
        <end position="136"/>
    </location>
</feature>
<feature type="region of interest" description="Disordered" evidence="3">
    <location>
        <begin position="1"/>
        <end position="24"/>
    </location>
</feature>
<feature type="splice variant" id="VSP_014466" description="In isoform 2." evidence="6">
    <original>KVFYPNSNKFSQQLAAGG</original>
    <variation>RVECSGTILSMFTWRKAS</variation>
    <location>
        <begin position="75"/>
        <end position="92"/>
    </location>
</feature>
<feature type="splice variant" id="VSP_014467" description="In isoform 2." evidence="6">
    <location>
        <begin position="93"/>
        <end position="136"/>
    </location>
</feature>
<gene>
    <name evidence="8" type="primary">PIERCE1</name>
</gene>
<name>PIRC1_HUMAN</name>
<protein>
    <recommendedName>
        <fullName evidence="7">Piercer of microtubule wall 1 protein</fullName>
        <shortName>Pierce1</shortName>
    </recommendedName>
    <alternativeName>
        <fullName>UPF0691 protein C9orf116</fullName>
    </alternativeName>
    <alternativeName>
        <fullName>p53-induced expression in RB-null cells protein 1</fullName>
    </alternativeName>
</protein>
<accession>Q5BN46</accession>
<accession>Q5T897</accession>
<accession>Q8WU44</accession>
<reference key="1">
    <citation type="journal article" date="2007" name="Mol. Cells">
        <title>Identification of a novel Rb-regulated gene associated with the cell cycle.</title>
        <authorList>
            <person name="Sung Y.H."/>
            <person name="Kim H.J."/>
            <person name="Lee H.W."/>
        </authorList>
    </citation>
    <scope>NUCLEOTIDE SEQUENCE [MRNA] (ISOFORM 1)</scope>
    <scope>DEVELOPMENTAL STAGE</scope>
</reference>
<reference key="2">
    <citation type="journal article" date="2004" name="Nature">
        <title>DNA sequence and analysis of human chromosome 9.</title>
        <authorList>
            <person name="Humphray S.J."/>
            <person name="Oliver K."/>
            <person name="Hunt A.R."/>
            <person name="Plumb R.W."/>
            <person name="Loveland J.E."/>
            <person name="Howe K.L."/>
            <person name="Andrews T.D."/>
            <person name="Searle S."/>
            <person name="Hunt S.E."/>
            <person name="Scott C.E."/>
            <person name="Jones M.C."/>
            <person name="Ainscough R."/>
            <person name="Almeida J.P."/>
            <person name="Ambrose K.D."/>
            <person name="Ashwell R.I.S."/>
            <person name="Babbage A.K."/>
            <person name="Babbage S."/>
            <person name="Bagguley C.L."/>
            <person name="Bailey J."/>
            <person name="Banerjee R."/>
            <person name="Barker D.J."/>
            <person name="Barlow K.F."/>
            <person name="Bates K."/>
            <person name="Beasley H."/>
            <person name="Beasley O."/>
            <person name="Bird C.P."/>
            <person name="Bray-Allen S."/>
            <person name="Brown A.J."/>
            <person name="Brown J.Y."/>
            <person name="Burford D."/>
            <person name="Burrill W."/>
            <person name="Burton J."/>
            <person name="Carder C."/>
            <person name="Carter N.P."/>
            <person name="Chapman J.C."/>
            <person name="Chen Y."/>
            <person name="Clarke G."/>
            <person name="Clark S.Y."/>
            <person name="Clee C.M."/>
            <person name="Clegg S."/>
            <person name="Collier R.E."/>
            <person name="Corby N."/>
            <person name="Crosier M."/>
            <person name="Cummings A.T."/>
            <person name="Davies J."/>
            <person name="Dhami P."/>
            <person name="Dunn M."/>
            <person name="Dutta I."/>
            <person name="Dyer L.W."/>
            <person name="Earthrowl M.E."/>
            <person name="Faulkner L."/>
            <person name="Fleming C.J."/>
            <person name="Frankish A."/>
            <person name="Frankland J.A."/>
            <person name="French L."/>
            <person name="Fricker D.G."/>
            <person name="Garner P."/>
            <person name="Garnett J."/>
            <person name="Ghori J."/>
            <person name="Gilbert J.G.R."/>
            <person name="Glison C."/>
            <person name="Grafham D.V."/>
            <person name="Gribble S."/>
            <person name="Griffiths C."/>
            <person name="Griffiths-Jones S."/>
            <person name="Grocock R."/>
            <person name="Guy J."/>
            <person name="Hall R.E."/>
            <person name="Hammond S."/>
            <person name="Harley J.L."/>
            <person name="Harrison E.S.I."/>
            <person name="Hart E.A."/>
            <person name="Heath P.D."/>
            <person name="Henderson C.D."/>
            <person name="Hopkins B.L."/>
            <person name="Howard P.J."/>
            <person name="Howden P.J."/>
            <person name="Huckle E."/>
            <person name="Johnson C."/>
            <person name="Johnson D."/>
            <person name="Joy A.A."/>
            <person name="Kay M."/>
            <person name="Keenan S."/>
            <person name="Kershaw J.K."/>
            <person name="Kimberley A.M."/>
            <person name="King A."/>
            <person name="Knights A."/>
            <person name="Laird G.K."/>
            <person name="Langford C."/>
            <person name="Lawlor S."/>
            <person name="Leongamornlert D.A."/>
            <person name="Leversha M."/>
            <person name="Lloyd C."/>
            <person name="Lloyd D.M."/>
            <person name="Lovell J."/>
            <person name="Martin S."/>
            <person name="Mashreghi-Mohammadi M."/>
            <person name="Matthews L."/>
            <person name="McLaren S."/>
            <person name="McLay K.E."/>
            <person name="McMurray A."/>
            <person name="Milne S."/>
            <person name="Nickerson T."/>
            <person name="Nisbett J."/>
            <person name="Nordsiek G."/>
            <person name="Pearce A.V."/>
            <person name="Peck A.I."/>
            <person name="Porter K.M."/>
            <person name="Pandian R."/>
            <person name="Pelan S."/>
            <person name="Phillimore B."/>
            <person name="Povey S."/>
            <person name="Ramsey Y."/>
            <person name="Rand V."/>
            <person name="Scharfe M."/>
            <person name="Sehra H.K."/>
            <person name="Shownkeen R."/>
            <person name="Sims S.K."/>
            <person name="Skuce C.D."/>
            <person name="Smith M."/>
            <person name="Steward C.A."/>
            <person name="Swarbreck D."/>
            <person name="Sycamore N."/>
            <person name="Tester J."/>
            <person name="Thorpe A."/>
            <person name="Tracey A."/>
            <person name="Tromans A."/>
            <person name="Thomas D.W."/>
            <person name="Wall M."/>
            <person name="Wallis J.M."/>
            <person name="West A.P."/>
            <person name="Whitehead S.L."/>
            <person name="Willey D.L."/>
            <person name="Williams S.A."/>
            <person name="Wilming L."/>
            <person name="Wray P.W."/>
            <person name="Young L."/>
            <person name="Ashurst J.L."/>
            <person name="Coulson A."/>
            <person name="Blocker H."/>
            <person name="Durbin R.M."/>
            <person name="Sulston J.E."/>
            <person name="Hubbard T."/>
            <person name="Jackson M.J."/>
            <person name="Bentley D.R."/>
            <person name="Beck S."/>
            <person name="Rogers J."/>
            <person name="Dunham I."/>
        </authorList>
    </citation>
    <scope>NUCLEOTIDE SEQUENCE [LARGE SCALE GENOMIC DNA]</scope>
</reference>
<reference key="3">
    <citation type="journal article" date="2004" name="Genome Res.">
        <title>The status, quality, and expansion of the NIH full-length cDNA project: the Mammalian Gene Collection (MGC).</title>
        <authorList>
            <consortium name="The MGC Project Team"/>
        </authorList>
    </citation>
    <scope>NUCLEOTIDE SEQUENCE [LARGE SCALE MRNA] (ISOFORM 2)</scope>
    <source>
        <tissue>Brain</tissue>
    </source>
</reference>
<reference evidence="9" key="4">
    <citation type="journal article" date="2022" name="Proc. Natl. Acad. Sci. U.S.A.">
        <title>SPACA9 is a lumenal protein of human ciliary singlet and doublet microtubules.</title>
        <authorList>
            <person name="Gui M."/>
            <person name="Croft J.T."/>
            <person name="Zabeo D."/>
            <person name="Acharya V."/>
            <person name="Kollman J.M."/>
            <person name="Burgoyne T."/>
            <person name="Hoog J.L."/>
            <person name="Brown A."/>
        </authorList>
    </citation>
    <scope>STRUCTURE BY ELECTRON MICROSCOPY (3.60 ANGSTROMS)</scope>
    <scope>FUNCTION</scope>
    <scope>SUBCELLULAR LOCATION</scope>
    <scope>TISSUE SPECIFICITY</scope>
</reference>
<sequence length="136" mass="15260">MAEECPRACAEPVAPKATAPPERTSDYYRVSADLPGRFNNPGWFRGYRTQKAVSVYRTSNQAYGSRAPTVHEMPKVFYPNSNKFSQQLAAGGMFRNNTLNVYLEKSIVTGPDNCITSCDRLNFHPSYNINRPSICD</sequence>
<comment type="function">
    <text evidence="2 5">Microtubule inner protein involved in the attachment of outer dynein arms (ODAs) to dynein-decorated doublet microtubules (DMTs) in cilia axoneme, which is required for motile cilia beating (PubMed:36191189). Functions at the initial step of left-right asymmetry specification of the visceral organs.</text>
</comment>
<comment type="subunit">
    <text evidence="1 2">Microtubule inner protein component of sperm flagellar doublet microtubules (By similarity). Interacts with CFAP53, ODAD1 and ODAD3; the interactions link the outer dynein arms docking complex (ODA-DC) to the internal microtubule inner proteins (MIP) in cilium axoneme (By similarity).</text>
</comment>
<comment type="interaction">
    <interactant intactId="EBI-10243636">
        <id>Q5BN46</id>
    </interactant>
    <interactant intactId="EBI-741101">
        <id>Q13643</id>
        <label>FHL3</label>
    </interactant>
    <organismsDiffer>false</organismsDiffer>
    <experiments>3</experiments>
</comment>
<comment type="interaction">
    <interactant intactId="EBI-12305735">
        <id>Q5BN46-2</id>
    </interactant>
    <interactant intactId="EBI-741101">
        <id>Q13643</id>
        <label>FHL3</label>
    </interactant>
    <organismsDiffer>false</organismsDiffer>
    <experiments>3</experiments>
</comment>
<comment type="subcellular location">
    <subcellularLocation>
        <location evidence="5">Cytoplasm</location>
        <location evidence="5">Cytoskeleton</location>
        <location evidence="5">Cilium axoneme</location>
    </subcellularLocation>
    <subcellularLocation>
        <location evidence="2">Cytoplasm</location>
        <location evidence="2">Cytoskeleton</location>
        <location evidence="2">Flagellum axoneme</location>
    </subcellularLocation>
</comment>
<comment type="alternative products">
    <event type="alternative splicing"/>
    <isoform>
        <id>Q5BN46-1</id>
        <name>1</name>
        <sequence type="displayed"/>
    </isoform>
    <isoform>
        <id>Q5BN46-2</id>
        <name>2</name>
        <sequence type="described" ref="VSP_014466 VSP_014467"/>
    </isoform>
</comment>
<comment type="tissue specificity">
    <text evidence="5">Expressed in airway epithelial cells.</text>
</comment>
<comment type="developmental stage">
    <text evidence="4">May be up-regulated during progression from G1 to S phase of the cell cycle. Maximal expression in S or G2 phase.</text>
</comment>
<comment type="similarity">
    <text evidence="7">Belongs to the PIERCE1 family.</text>
</comment>
<organism>
    <name type="scientific">Homo sapiens</name>
    <name type="common">Human</name>
    <dbReference type="NCBI Taxonomy" id="9606"/>
    <lineage>
        <taxon>Eukaryota</taxon>
        <taxon>Metazoa</taxon>
        <taxon>Chordata</taxon>
        <taxon>Craniata</taxon>
        <taxon>Vertebrata</taxon>
        <taxon>Euteleostomi</taxon>
        <taxon>Mammalia</taxon>
        <taxon>Eutheria</taxon>
        <taxon>Euarchontoglires</taxon>
        <taxon>Primates</taxon>
        <taxon>Haplorrhini</taxon>
        <taxon>Catarrhini</taxon>
        <taxon>Hominidae</taxon>
        <taxon>Homo</taxon>
    </lineage>
</organism>
<keyword id="KW-0002">3D-structure</keyword>
<keyword id="KW-0025">Alternative splicing</keyword>
<keyword id="KW-0966">Cell projection</keyword>
<keyword id="KW-0969">Cilium</keyword>
<keyword id="KW-0963">Cytoplasm</keyword>
<keyword id="KW-0206">Cytoskeleton</keyword>
<keyword id="KW-0282">Flagellum</keyword>
<keyword id="KW-1267">Proteomics identification</keyword>
<keyword id="KW-1185">Reference proteome</keyword>
<evidence type="ECO:0000250" key="1">
    <source>
        <dbReference type="UniProtKB" id="Q32P67"/>
    </source>
</evidence>
<evidence type="ECO:0000250" key="2">
    <source>
        <dbReference type="UniProtKB" id="Q5BN45"/>
    </source>
</evidence>
<evidence type="ECO:0000256" key="3">
    <source>
        <dbReference type="SAM" id="MobiDB-lite"/>
    </source>
</evidence>
<evidence type="ECO:0000269" key="4">
    <source>
    </source>
</evidence>
<evidence type="ECO:0000269" key="5">
    <source>
    </source>
</evidence>
<evidence type="ECO:0000303" key="6">
    <source>
    </source>
</evidence>
<evidence type="ECO:0000305" key="7"/>
<evidence type="ECO:0000312" key="8">
    <source>
        <dbReference type="HGNC" id="HGNC:28435"/>
    </source>
</evidence>
<evidence type="ECO:0007744" key="9">
    <source>
        <dbReference type="PDB" id="7UNG"/>
    </source>
</evidence>
<proteinExistence type="evidence at protein level"/>